<comment type="catalytic activity">
    <reaction evidence="1">
        <text>5-amino-1-(5-phospho-D-ribosyl)imidazole-4-carboxylate + L-aspartate + ATP = (2S)-2-[5-amino-1-(5-phospho-beta-D-ribosyl)imidazole-4-carboxamido]succinate + ADP + phosphate + 2 H(+)</text>
        <dbReference type="Rhea" id="RHEA:22628"/>
        <dbReference type="ChEBI" id="CHEBI:15378"/>
        <dbReference type="ChEBI" id="CHEBI:29991"/>
        <dbReference type="ChEBI" id="CHEBI:30616"/>
        <dbReference type="ChEBI" id="CHEBI:43474"/>
        <dbReference type="ChEBI" id="CHEBI:58443"/>
        <dbReference type="ChEBI" id="CHEBI:77657"/>
        <dbReference type="ChEBI" id="CHEBI:456216"/>
        <dbReference type="EC" id="6.3.2.6"/>
    </reaction>
</comment>
<comment type="pathway">
    <text evidence="1">Purine metabolism; IMP biosynthesis via de novo pathway; 5-amino-1-(5-phospho-D-ribosyl)imidazole-4-carboxamide from 5-amino-1-(5-phospho-D-ribosyl)imidazole-4-carboxylate: step 1/2.</text>
</comment>
<comment type="similarity">
    <text evidence="1">Belongs to the SAICAR synthetase family.</text>
</comment>
<protein>
    <recommendedName>
        <fullName evidence="1">Phosphoribosylaminoimidazole-succinocarboxamide synthase</fullName>
        <ecNumber evidence="1">6.3.2.6</ecNumber>
    </recommendedName>
    <alternativeName>
        <fullName evidence="1">SAICAR synthetase</fullName>
    </alternativeName>
</protein>
<reference key="1">
    <citation type="journal article" date="2009" name="Genome Res.">
        <title>Newly introduced genomic prophage islands are critical determinants of in vivo competitiveness in the Liverpool epidemic strain of Pseudomonas aeruginosa.</title>
        <authorList>
            <person name="Winstanley C."/>
            <person name="Langille M.G.I."/>
            <person name="Fothergill J.L."/>
            <person name="Kukavica-Ibrulj I."/>
            <person name="Paradis-Bleau C."/>
            <person name="Sanschagrin F."/>
            <person name="Thomson N.R."/>
            <person name="Winsor G.L."/>
            <person name="Quail M.A."/>
            <person name="Lennard N."/>
            <person name="Bignell A."/>
            <person name="Clarke L."/>
            <person name="Seeger K."/>
            <person name="Saunders D."/>
            <person name="Harris D."/>
            <person name="Parkhill J."/>
            <person name="Hancock R.E.W."/>
            <person name="Brinkman F.S.L."/>
            <person name="Levesque R.C."/>
        </authorList>
    </citation>
    <scope>NUCLEOTIDE SEQUENCE [LARGE SCALE GENOMIC DNA]</scope>
    <source>
        <strain>LESB58</strain>
    </source>
</reference>
<accession>B7UXT0</accession>
<name>PUR7_PSEA8</name>
<proteinExistence type="inferred from homology"/>
<organism>
    <name type="scientific">Pseudomonas aeruginosa (strain LESB58)</name>
    <dbReference type="NCBI Taxonomy" id="557722"/>
    <lineage>
        <taxon>Bacteria</taxon>
        <taxon>Pseudomonadati</taxon>
        <taxon>Pseudomonadota</taxon>
        <taxon>Gammaproteobacteria</taxon>
        <taxon>Pseudomonadales</taxon>
        <taxon>Pseudomonadaceae</taxon>
        <taxon>Pseudomonas</taxon>
    </lineage>
</organism>
<sequence length="236" mass="26831">MEKREELYRGKAKSVYQTDDADRLILLFRNDTSAFDGKRIEQLDRKGAVNNKFNAFIMQKLEAAGIPTQFDKLLSDTECLVKKLDMIPVECVVRNFAAGSLVRRLGVEEGIALTPPTFELFLKNDALGDPFINESHVQAFGWATPEQLAQMKTYSFKVNEVLNKLFDDAGLLLVDFKLEFGLFHGQIVLGDEFSPDGCRLWDKETRKKMDKDRFRQGLGDVIEAYEEVAKRLGVPL</sequence>
<evidence type="ECO:0000255" key="1">
    <source>
        <dbReference type="HAMAP-Rule" id="MF_00137"/>
    </source>
</evidence>
<feature type="chain" id="PRO_1000117840" description="Phosphoribosylaminoimidazole-succinocarboxamide synthase">
    <location>
        <begin position="1"/>
        <end position="236"/>
    </location>
</feature>
<dbReference type="EC" id="6.3.2.6" evidence="1"/>
<dbReference type="EMBL" id="FM209186">
    <property type="protein sequence ID" value="CAW29067.1"/>
    <property type="molecule type" value="Genomic_DNA"/>
</dbReference>
<dbReference type="RefSeq" id="WP_003108622.1">
    <property type="nucleotide sequence ID" value="NC_011770.1"/>
</dbReference>
<dbReference type="SMR" id="B7UXT0"/>
<dbReference type="KEGG" id="pag:PLES_43121"/>
<dbReference type="HOGENOM" id="CLU_061495_2_0_6"/>
<dbReference type="UniPathway" id="UPA00074">
    <property type="reaction ID" value="UER00131"/>
</dbReference>
<dbReference type="GO" id="GO:0005829">
    <property type="term" value="C:cytosol"/>
    <property type="evidence" value="ECO:0007669"/>
    <property type="project" value="TreeGrafter"/>
</dbReference>
<dbReference type="GO" id="GO:0005524">
    <property type="term" value="F:ATP binding"/>
    <property type="evidence" value="ECO:0007669"/>
    <property type="project" value="UniProtKB-KW"/>
</dbReference>
<dbReference type="GO" id="GO:0004639">
    <property type="term" value="F:phosphoribosylaminoimidazolesuccinocarboxamide synthase activity"/>
    <property type="evidence" value="ECO:0007669"/>
    <property type="project" value="UniProtKB-UniRule"/>
</dbReference>
<dbReference type="GO" id="GO:0006189">
    <property type="term" value="P:'de novo' IMP biosynthetic process"/>
    <property type="evidence" value="ECO:0007669"/>
    <property type="project" value="UniProtKB-UniRule"/>
</dbReference>
<dbReference type="GO" id="GO:0009236">
    <property type="term" value="P:cobalamin biosynthetic process"/>
    <property type="evidence" value="ECO:0007669"/>
    <property type="project" value="InterPro"/>
</dbReference>
<dbReference type="CDD" id="cd01415">
    <property type="entry name" value="SAICAR_synt_PurC"/>
    <property type="match status" value="1"/>
</dbReference>
<dbReference type="FunFam" id="3.30.200.20:FF:000086">
    <property type="entry name" value="Phosphoribosylaminoimidazole-succinocarboxamide synthase"/>
    <property type="match status" value="1"/>
</dbReference>
<dbReference type="FunFam" id="3.30.470.20:FF:000006">
    <property type="entry name" value="Phosphoribosylaminoimidazole-succinocarboxamide synthase"/>
    <property type="match status" value="1"/>
</dbReference>
<dbReference type="Gene3D" id="3.30.470.20">
    <property type="entry name" value="ATP-grasp fold, B domain"/>
    <property type="match status" value="1"/>
</dbReference>
<dbReference type="Gene3D" id="3.30.200.20">
    <property type="entry name" value="Phosphorylase Kinase, domain 1"/>
    <property type="match status" value="1"/>
</dbReference>
<dbReference type="HAMAP" id="MF_00137">
    <property type="entry name" value="SAICAR_synth"/>
    <property type="match status" value="1"/>
</dbReference>
<dbReference type="InterPro" id="IPR028923">
    <property type="entry name" value="SAICAR_synt/ADE2_N"/>
</dbReference>
<dbReference type="InterPro" id="IPR033934">
    <property type="entry name" value="SAICAR_synt_PurC"/>
</dbReference>
<dbReference type="InterPro" id="IPR001636">
    <property type="entry name" value="SAICAR_synth"/>
</dbReference>
<dbReference type="InterPro" id="IPR050089">
    <property type="entry name" value="SAICAR_synthetase"/>
</dbReference>
<dbReference type="InterPro" id="IPR018236">
    <property type="entry name" value="SAICAR_synthetase_CS"/>
</dbReference>
<dbReference type="NCBIfam" id="TIGR00081">
    <property type="entry name" value="purC"/>
    <property type="match status" value="1"/>
</dbReference>
<dbReference type="PANTHER" id="PTHR43599">
    <property type="entry name" value="MULTIFUNCTIONAL PROTEIN ADE2"/>
    <property type="match status" value="1"/>
</dbReference>
<dbReference type="PANTHER" id="PTHR43599:SF3">
    <property type="entry name" value="SI:DKEY-6E2.2"/>
    <property type="match status" value="1"/>
</dbReference>
<dbReference type="Pfam" id="PF01259">
    <property type="entry name" value="SAICAR_synt"/>
    <property type="match status" value="1"/>
</dbReference>
<dbReference type="SUPFAM" id="SSF56104">
    <property type="entry name" value="SAICAR synthase-like"/>
    <property type="match status" value="1"/>
</dbReference>
<dbReference type="PROSITE" id="PS01057">
    <property type="entry name" value="SAICAR_SYNTHETASE_1"/>
    <property type="match status" value="1"/>
</dbReference>
<dbReference type="PROSITE" id="PS01058">
    <property type="entry name" value="SAICAR_SYNTHETASE_2"/>
    <property type="match status" value="1"/>
</dbReference>
<gene>
    <name evidence="1" type="primary">purC</name>
    <name type="ordered locus">PLES_43121</name>
</gene>
<keyword id="KW-0067">ATP-binding</keyword>
<keyword id="KW-0436">Ligase</keyword>
<keyword id="KW-0547">Nucleotide-binding</keyword>
<keyword id="KW-0658">Purine biosynthesis</keyword>